<comment type="function">
    <text>Acts as a transcriptional activator by binding to an A/T-rich sequence, the FLAT element, in the insulin gene promoter. Required for development of the roof plate and, in turn, for specification of dorsal cell fates in the CNS and developing vertebrae.</text>
</comment>
<comment type="subcellular location">
    <subcellularLocation>
        <location evidence="1">Nucleus</location>
    </subcellularLocation>
</comment>
<comment type="disease">
    <text>Defects in Lmx1a are the cause of the spontaneous neurologic mutant mouse, called 'dreher' (dr) and results from a failure of the roof plate to develop.</text>
</comment>
<organism>
    <name type="scientific">Mus musculus</name>
    <name type="common">Mouse</name>
    <dbReference type="NCBI Taxonomy" id="10090"/>
    <lineage>
        <taxon>Eukaryota</taxon>
        <taxon>Metazoa</taxon>
        <taxon>Chordata</taxon>
        <taxon>Craniata</taxon>
        <taxon>Vertebrata</taxon>
        <taxon>Euteleostomi</taxon>
        <taxon>Mammalia</taxon>
        <taxon>Eutheria</taxon>
        <taxon>Euarchontoglires</taxon>
        <taxon>Glires</taxon>
        <taxon>Rodentia</taxon>
        <taxon>Myomorpha</taxon>
        <taxon>Muroidea</taxon>
        <taxon>Muridae</taxon>
        <taxon>Murinae</taxon>
        <taxon>Mus</taxon>
        <taxon>Mus</taxon>
    </lineage>
</organism>
<feature type="chain" id="PRO_0000075827" description="LIM homeobox transcription factor 1-alpha">
    <location>
        <begin position="1"/>
        <end position="382"/>
    </location>
</feature>
<feature type="domain" description="LIM zinc-binding 1" evidence="2">
    <location>
        <begin position="33"/>
        <end position="92"/>
    </location>
</feature>
<feature type="domain" description="LIM zinc-binding 2" evidence="2">
    <location>
        <begin position="92"/>
        <end position="154"/>
    </location>
</feature>
<feature type="DNA-binding region" description="Homeobox" evidence="1">
    <location>
        <begin position="195"/>
        <end position="254"/>
    </location>
</feature>
<feature type="region of interest" description="Disordered" evidence="3">
    <location>
        <begin position="161"/>
        <end position="208"/>
    </location>
</feature>
<feature type="region of interest" description="Disordered" evidence="3">
    <location>
        <begin position="252"/>
        <end position="286"/>
    </location>
</feature>
<feature type="compositionally biased region" description="Low complexity" evidence="3">
    <location>
        <begin position="256"/>
        <end position="269"/>
    </location>
</feature>
<sequence>MLDGLKMEENFQSAIETSASFSSLLGRAVSPKSVCEGCQRVISDRFLLRLNDSFWHEQCVQCASCKEPLETTCFYRDKKLYCKYHYEKLFAVKCGGCFEAIAPNEFVMRAQKSVYHLSCFCCCVCERQLQKGDEFVLKEGQLLCKGDYEKERELLSLVSPAASDSGKSDDEESLCKSAHGAGKGASEDGKDHKRPKRPRTILTTQQRRAFKASFEVSSKPCRKVRETLAAETGLSVRVVQVWFQNQRAKMKKLARRQQQQQQDQQNTQRLTSAQTNGSGNAGMEGIMNPYTTLPTPQQLLAIEQSVYNSDPFRQGLTPPQMPGDHMHPYGAEPLFHDLDSDDTSLSNLGDCFLATSEAGPLQSRVGNPIDHLYSMQNSYFTS</sequence>
<dbReference type="EMBL" id="AF226662">
    <property type="protein sequence ID" value="AAF43012.1"/>
    <property type="molecule type" value="mRNA"/>
</dbReference>
<dbReference type="CCDS" id="CCDS15460.1"/>
<dbReference type="RefSeq" id="NP_001404412.1">
    <property type="nucleotide sequence ID" value="NM_001417483.1"/>
</dbReference>
<dbReference type="RefSeq" id="NP_387501.1">
    <property type="nucleotide sequence ID" value="NM_033652.6"/>
</dbReference>
<dbReference type="RefSeq" id="XP_006496674.1">
    <property type="nucleotide sequence ID" value="XM_006496611.2"/>
</dbReference>
<dbReference type="RefSeq" id="XP_017177173.1">
    <property type="nucleotide sequence ID" value="XM_017321684.2"/>
</dbReference>
<dbReference type="RefSeq" id="XP_030097992.1">
    <property type="nucleotide sequence ID" value="XM_030242132.2"/>
</dbReference>
<dbReference type="SMR" id="Q9JKU8"/>
<dbReference type="BioGRID" id="225780">
    <property type="interactions" value="5"/>
</dbReference>
<dbReference type="FunCoup" id="Q9JKU8">
    <property type="interactions" value="1063"/>
</dbReference>
<dbReference type="IntAct" id="Q9JKU8">
    <property type="interactions" value="4"/>
</dbReference>
<dbReference type="STRING" id="10090.ENSMUSP00000028003"/>
<dbReference type="PhosphoSitePlus" id="Q9JKU8"/>
<dbReference type="PaxDb" id="10090-ENSMUSP00000028003"/>
<dbReference type="ProteomicsDB" id="292345"/>
<dbReference type="Antibodypedia" id="20523">
    <property type="antibodies" value="213 antibodies from 27 providers"/>
</dbReference>
<dbReference type="DNASU" id="110648"/>
<dbReference type="Ensembl" id="ENSMUST00000028003.9">
    <property type="protein sequence ID" value="ENSMUSP00000028003.7"/>
    <property type="gene ID" value="ENSMUSG00000026686.15"/>
</dbReference>
<dbReference type="Ensembl" id="ENSMUST00000111377.8">
    <property type="protein sequence ID" value="ENSMUSP00000107008.2"/>
    <property type="gene ID" value="ENSMUSG00000026686.15"/>
</dbReference>
<dbReference type="GeneID" id="110648"/>
<dbReference type="KEGG" id="mmu:110648"/>
<dbReference type="UCSC" id="uc007dlc.1">
    <property type="organism name" value="mouse"/>
</dbReference>
<dbReference type="AGR" id="MGI:1888519"/>
<dbReference type="CTD" id="4009"/>
<dbReference type="MGI" id="MGI:1888519">
    <property type="gene designation" value="Lmx1a"/>
</dbReference>
<dbReference type="VEuPathDB" id="HostDB:ENSMUSG00000026686"/>
<dbReference type="eggNOG" id="KOG0490">
    <property type="taxonomic scope" value="Eukaryota"/>
</dbReference>
<dbReference type="GeneTree" id="ENSGT00940000157774"/>
<dbReference type="HOGENOM" id="CLU_027802_0_0_1"/>
<dbReference type="InParanoid" id="Q9JKU8"/>
<dbReference type="OMA" id="CKLGQAS"/>
<dbReference type="OrthoDB" id="6159439at2759"/>
<dbReference type="PhylomeDB" id="Q9JKU8"/>
<dbReference type="TreeFam" id="TF315442"/>
<dbReference type="BioGRID-ORCS" id="110648">
    <property type="hits" value="4 hits in 78 CRISPR screens"/>
</dbReference>
<dbReference type="ChiTaRS" id="Lmx1a">
    <property type="organism name" value="mouse"/>
</dbReference>
<dbReference type="PRO" id="PR:Q9JKU8"/>
<dbReference type="Proteomes" id="UP000000589">
    <property type="component" value="Chromosome 1"/>
</dbReference>
<dbReference type="RNAct" id="Q9JKU8">
    <property type="molecule type" value="protein"/>
</dbReference>
<dbReference type="Bgee" id="ENSMUSG00000026686">
    <property type="expression patterns" value="Expressed in roof plate and 54 other cell types or tissues"/>
</dbReference>
<dbReference type="ExpressionAtlas" id="Q9JKU8">
    <property type="expression patterns" value="baseline and differential"/>
</dbReference>
<dbReference type="GO" id="GO:0005634">
    <property type="term" value="C:nucleus"/>
    <property type="evidence" value="ECO:0007669"/>
    <property type="project" value="UniProtKB-SubCell"/>
</dbReference>
<dbReference type="GO" id="GO:0001228">
    <property type="term" value="F:DNA-binding transcription activator activity, RNA polymerase II-specific"/>
    <property type="evidence" value="ECO:0000314"/>
    <property type="project" value="NTNU_SB"/>
</dbReference>
<dbReference type="GO" id="GO:0046872">
    <property type="term" value="F:metal ion binding"/>
    <property type="evidence" value="ECO:0007669"/>
    <property type="project" value="UniProtKB-KW"/>
</dbReference>
<dbReference type="GO" id="GO:0000977">
    <property type="term" value="F:RNA polymerase II transcription regulatory region sequence-specific DNA binding"/>
    <property type="evidence" value="ECO:0000314"/>
    <property type="project" value="ParkinsonsUK-UCL"/>
</dbReference>
<dbReference type="GO" id="GO:0007411">
    <property type="term" value="P:axon guidance"/>
    <property type="evidence" value="ECO:0000315"/>
    <property type="project" value="MGI"/>
</dbReference>
<dbReference type="GO" id="GO:0007417">
    <property type="term" value="P:central nervous system development"/>
    <property type="evidence" value="ECO:0000315"/>
    <property type="project" value="MGI"/>
</dbReference>
<dbReference type="GO" id="GO:0021953">
    <property type="term" value="P:central nervous system neuron differentiation"/>
    <property type="evidence" value="ECO:0000315"/>
    <property type="project" value="MGI"/>
</dbReference>
<dbReference type="GO" id="GO:0021549">
    <property type="term" value="P:cerebellum development"/>
    <property type="evidence" value="ECO:0000315"/>
    <property type="project" value="MGI"/>
</dbReference>
<dbReference type="GO" id="GO:0021542">
    <property type="term" value="P:dentate gyrus development"/>
    <property type="evidence" value="ECO:0000315"/>
    <property type="project" value="MGI"/>
</dbReference>
<dbReference type="GO" id="GO:0071542">
    <property type="term" value="P:dopaminergic neuron differentiation"/>
    <property type="evidence" value="ECO:0000315"/>
    <property type="project" value="MGI"/>
</dbReference>
<dbReference type="GO" id="GO:0021766">
    <property type="term" value="P:hippocampus development"/>
    <property type="evidence" value="ECO:0000315"/>
    <property type="project" value="MGI"/>
</dbReference>
<dbReference type="GO" id="GO:0007626">
    <property type="term" value="P:locomotory behavior"/>
    <property type="evidence" value="ECO:0000316"/>
    <property type="project" value="ParkinsonsUK-UCL"/>
</dbReference>
<dbReference type="GO" id="GO:0007613">
    <property type="term" value="P:memory"/>
    <property type="evidence" value="ECO:0000316"/>
    <property type="project" value="ParkinsonsUK-UCL"/>
</dbReference>
<dbReference type="GO" id="GO:0030901">
    <property type="term" value="P:midbrain development"/>
    <property type="evidence" value="ECO:0000315"/>
    <property type="project" value="MGI"/>
</dbReference>
<dbReference type="GO" id="GO:1904948">
    <property type="term" value="P:midbrain dopaminergic neuron differentiation"/>
    <property type="evidence" value="ECO:0000314"/>
    <property type="project" value="ParkinsonsUK-UCL"/>
</dbReference>
<dbReference type="GO" id="GO:0045665">
    <property type="term" value="P:negative regulation of neuron differentiation"/>
    <property type="evidence" value="ECO:0000315"/>
    <property type="project" value="MGI"/>
</dbReference>
<dbReference type="GO" id="GO:0042048">
    <property type="term" value="P:olfactory behavior"/>
    <property type="evidence" value="ECO:0000316"/>
    <property type="project" value="ParkinsonsUK-UCL"/>
</dbReference>
<dbReference type="GO" id="GO:0090263">
    <property type="term" value="P:positive regulation of canonical Wnt signaling pathway"/>
    <property type="evidence" value="ECO:0000305"/>
    <property type="project" value="ParkinsonsUK-UCL"/>
</dbReference>
<dbReference type="GO" id="GO:0045944">
    <property type="term" value="P:positive regulation of transcription by RNA polymerase II"/>
    <property type="evidence" value="ECO:0000314"/>
    <property type="project" value="ParkinsonsUK-UCL"/>
</dbReference>
<dbReference type="GO" id="GO:0001558">
    <property type="term" value="P:regulation of cell growth"/>
    <property type="evidence" value="ECO:0000315"/>
    <property type="project" value="MGI"/>
</dbReference>
<dbReference type="GO" id="GO:0010468">
    <property type="term" value="P:regulation of gene expression"/>
    <property type="evidence" value="ECO:0000315"/>
    <property type="project" value="MGI"/>
</dbReference>
<dbReference type="GO" id="GO:0050808">
    <property type="term" value="P:synapse organization"/>
    <property type="evidence" value="ECO:0000316"/>
    <property type="project" value="ParkinsonsUK-UCL"/>
</dbReference>
<dbReference type="CDD" id="cd00086">
    <property type="entry name" value="homeodomain"/>
    <property type="match status" value="1"/>
</dbReference>
<dbReference type="CDD" id="cd09370">
    <property type="entry name" value="LIM1_Lmx1a"/>
    <property type="match status" value="1"/>
</dbReference>
<dbReference type="CDD" id="cd09378">
    <property type="entry name" value="LIM2_Lmx1a_Lmx1b"/>
    <property type="match status" value="1"/>
</dbReference>
<dbReference type="FunFam" id="1.10.10.60:FF:000095">
    <property type="entry name" value="LIM homeobox transcription factor 1 beta"/>
    <property type="match status" value="1"/>
</dbReference>
<dbReference type="FunFam" id="2.10.110.10:FF:000040">
    <property type="entry name" value="LIM homeobox transcription factor 1 beta"/>
    <property type="match status" value="1"/>
</dbReference>
<dbReference type="FunFam" id="2.10.110.10:FF:000006">
    <property type="entry name" value="LIM homeobox transcription factor 1-beta"/>
    <property type="match status" value="1"/>
</dbReference>
<dbReference type="Gene3D" id="2.10.110.10">
    <property type="entry name" value="Cysteine Rich Protein"/>
    <property type="match status" value="2"/>
</dbReference>
<dbReference type="Gene3D" id="1.10.10.60">
    <property type="entry name" value="Homeodomain-like"/>
    <property type="match status" value="1"/>
</dbReference>
<dbReference type="InterPro" id="IPR001356">
    <property type="entry name" value="HD"/>
</dbReference>
<dbReference type="InterPro" id="IPR017970">
    <property type="entry name" value="Homeobox_CS"/>
</dbReference>
<dbReference type="InterPro" id="IPR009057">
    <property type="entry name" value="Homeodomain-like_sf"/>
</dbReference>
<dbReference type="InterPro" id="IPR050453">
    <property type="entry name" value="LIM_Homeobox_TF"/>
</dbReference>
<dbReference type="InterPro" id="IPR042688">
    <property type="entry name" value="Lmx1a_LIM1"/>
</dbReference>
<dbReference type="InterPro" id="IPR001781">
    <property type="entry name" value="Znf_LIM"/>
</dbReference>
<dbReference type="PANTHER" id="PTHR24208:SF88">
    <property type="entry name" value="LIM HOMEOBOX TRANSCRIPTION FACTOR 1-ALPHA"/>
    <property type="match status" value="1"/>
</dbReference>
<dbReference type="PANTHER" id="PTHR24208">
    <property type="entry name" value="LIM/HOMEOBOX PROTEIN LHX"/>
    <property type="match status" value="1"/>
</dbReference>
<dbReference type="Pfam" id="PF00046">
    <property type="entry name" value="Homeodomain"/>
    <property type="match status" value="1"/>
</dbReference>
<dbReference type="Pfam" id="PF00412">
    <property type="entry name" value="LIM"/>
    <property type="match status" value="2"/>
</dbReference>
<dbReference type="SMART" id="SM00389">
    <property type="entry name" value="HOX"/>
    <property type="match status" value="1"/>
</dbReference>
<dbReference type="SMART" id="SM00132">
    <property type="entry name" value="LIM"/>
    <property type="match status" value="2"/>
</dbReference>
<dbReference type="SUPFAM" id="SSF57716">
    <property type="entry name" value="Glucocorticoid receptor-like (DNA-binding domain)"/>
    <property type="match status" value="2"/>
</dbReference>
<dbReference type="SUPFAM" id="SSF46689">
    <property type="entry name" value="Homeodomain-like"/>
    <property type="match status" value="1"/>
</dbReference>
<dbReference type="PROSITE" id="PS00027">
    <property type="entry name" value="HOMEOBOX_1"/>
    <property type="match status" value="1"/>
</dbReference>
<dbReference type="PROSITE" id="PS50071">
    <property type="entry name" value="HOMEOBOX_2"/>
    <property type="match status" value="1"/>
</dbReference>
<dbReference type="PROSITE" id="PS00478">
    <property type="entry name" value="LIM_DOMAIN_1"/>
    <property type="match status" value="2"/>
</dbReference>
<dbReference type="PROSITE" id="PS50023">
    <property type="entry name" value="LIM_DOMAIN_2"/>
    <property type="match status" value="2"/>
</dbReference>
<evidence type="ECO:0000255" key="1">
    <source>
        <dbReference type="PROSITE-ProRule" id="PRU00108"/>
    </source>
</evidence>
<evidence type="ECO:0000255" key="2">
    <source>
        <dbReference type="PROSITE-ProRule" id="PRU00125"/>
    </source>
</evidence>
<evidence type="ECO:0000256" key="3">
    <source>
        <dbReference type="SAM" id="MobiDB-lite"/>
    </source>
</evidence>
<proteinExistence type="evidence at transcript level"/>
<keyword id="KW-0010">Activator</keyword>
<keyword id="KW-0217">Developmental protein</keyword>
<keyword id="KW-0238">DNA-binding</keyword>
<keyword id="KW-0371">Homeobox</keyword>
<keyword id="KW-0440">LIM domain</keyword>
<keyword id="KW-0479">Metal-binding</keyword>
<keyword id="KW-0539">Nucleus</keyword>
<keyword id="KW-1185">Reference proteome</keyword>
<keyword id="KW-0677">Repeat</keyword>
<keyword id="KW-0804">Transcription</keyword>
<keyword id="KW-0805">Transcription regulation</keyword>
<keyword id="KW-0862">Zinc</keyword>
<name>LMX1A_MOUSE</name>
<accession>Q9JKU8</accession>
<reference key="1">
    <citation type="journal article" date="2000" name="Nature">
        <title>The mouse Dreher gene Lmx1a controls formation of the roof plate in the vertebrate CNS.</title>
        <authorList>
            <person name="Millonig J.H."/>
            <person name="Millen K.J."/>
            <person name="Hatten M.E."/>
        </authorList>
    </citation>
    <scope>NUCLEOTIDE SEQUENCE [MRNA]</scope>
    <source>
        <strain>C3HeB/Fele-a/a</strain>
    </source>
</reference>
<protein>
    <recommendedName>
        <fullName>LIM homeobox transcription factor 1-alpha</fullName>
    </recommendedName>
    <alternativeName>
        <fullName>LIM/homeobox protein 1.1</fullName>
        <shortName>LMX-1.1</shortName>
    </alternativeName>
    <alternativeName>
        <fullName>LIM/homeobox protein LMX1A</fullName>
    </alternativeName>
</protein>
<gene>
    <name type="primary">Lmx1a</name>
</gene>